<gene>
    <name evidence="13" type="primary">Enpp7</name>
</gene>
<proteinExistence type="evidence at protein level"/>
<name>ENPP7_RAT</name>
<accession>Q5EZ72</accession>
<feature type="signal peptide" evidence="3">
    <location>
        <begin position="1"/>
        <end position="21"/>
    </location>
</feature>
<feature type="chain" id="PRO_0000036404" description="Ectonucleotide pyrophosphatase/phosphodiesterase family member 7">
    <location>
        <begin position="22"/>
        <end position="439"/>
    </location>
</feature>
<feature type="topological domain" description="Extracellular" evidence="10">
    <location>
        <begin position="22"/>
        <end position="422"/>
    </location>
</feature>
<feature type="transmembrane region" description="Helical" evidence="3">
    <location>
        <begin position="423"/>
        <end position="439"/>
    </location>
</feature>
<feature type="region of interest" description="Required for enzyme activity" evidence="2">
    <location>
        <begin position="71"/>
        <end position="77"/>
    </location>
</feature>
<feature type="active site" description="Nucleophile" evidence="2">
    <location>
        <position position="74"/>
    </location>
</feature>
<feature type="binding site" evidence="2">
    <location>
        <position position="38"/>
    </location>
    <ligand>
        <name>Zn(2+)</name>
        <dbReference type="ChEBI" id="CHEBI:29105"/>
        <label>1</label>
    </ligand>
</feature>
<feature type="binding site" evidence="2">
    <location>
        <position position="74"/>
    </location>
    <ligand>
        <name>Zn(2+)</name>
        <dbReference type="ChEBI" id="CHEBI:29105"/>
        <label>1</label>
    </ligand>
</feature>
<feature type="binding site" evidence="2">
    <location>
        <position position="95"/>
    </location>
    <ligand>
        <name>substrate</name>
    </ligand>
</feature>
<feature type="binding site" evidence="2">
    <location>
        <position position="198"/>
    </location>
    <ligand>
        <name>Zn(2+)</name>
        <dbReference type="ChEBI" id="CHEBI:29105"/>
        <label>2</label>
    </ligand>
</feature>
<feature type="binding site" evidence="2">
    <location>
        <position position="202"/>
    </location>
    <ligand>
        <name>Zn(2+)</name>
        <dbReference type="ChEBI" id="CHEBI:29105"/>
        <label>2</label>
    </ligand>
</feature>
<feature type="binding site" evidence="2">
    <location>
        <position position="245"/>
    </location>
    <ligand>
        <name>Zn(2+)</name>
        <dbReference type="ChEBI" id="CHEBI:29105"/>
        <label>1</label>
    </ligand>
</feature>
<feature type="binding site" evidence="2">
    <location>
        <position position="246"/>
    </location>
    <ligand>
        <name>Zn(2+)</name>
        <dbReference type="ChEBI" id="CHEBI:29105"/>
        <label>1</label>
    </ligand>
</feature>
<feature type="binding site" evidence="2">
    <location>
        <position position="352"/>
    </location>
    <ligand>
        <name>Zn(2+)</name>
        <dbReference type="ChEBI" id="CHEBI:29105"/>
        <label>2</label>
    </ligand>
</feature>
<feature type="glycosylation site" description="N-linked (GlcNAc...) asparagine" evidence="3">
    <location>
        <position position="99"/>
    </location>
</feature>
<feature type="glycosylation site" description="N-linked (GlcNAc...) asparagine" evidence="3">
    <location>
        <position position="120"/>
    </location>
</feature>
<feature type="glycosylation site" description="N-linked (GlcNAc...) asparagine" evidence="3">
    <location>
        <position position="145"/>
    </location>
</feature>
<feature type="glycosylation site" description="N-linked (GlcNAc...) asparagine" evidence="3">
    <location>
        <position position="167"/>
    </location>
</feature>
<feature type="glycosylation site" description="N-linked (GlcNAc...) asparagine" evidence="3">
    <location>
        <position position="266"/>
    </location>
</feature>
<feature type="mutagenesis site" description="Abolishes the phosphoric diester hydrolase activity against PAF." evidence="6">
    <original>D</original>
    <variation>A</variation>
    <location>
        <position position="198"/>
    </location>
</feature>
<feature type="mutagenesis site" description="Abolishes the phosphoric diester hydrolase activity against PAF." evidence="6">
    <original>D</original>
    <variation>A</variation>
    <location>
        <position position="245"/>
    </location>
</feature>
<protein>
    <recommendedName>
        <fullName evidence="9">Ectonucleotide pyrophosphatase/phosphodiesterase family member 7</fullName>
        <shortName>E-NPP 7</shortName>
        <shortName>NPP-7</shortName>
        <ecNumber evidence="5 6">3.1.4.12</ecNumber>
    </recommendedName>
    <alternativeName>
        <fullName>Alkaline sphingomyelin phosphodiesterase</fullName>
    </alternativeName>
    <alternativeName>
        <fullName evidence="7 8">Intestinal alkaline sphingomyelinase</fullName>
        <shortName evidence="2">Alk-SMase</shortName>
    </alternativeName>
</protein>
<keyword id="KW-1003">Cell membrane</keyword>
<keyword id="KW-0903">Direct protein sequencing</keyword>
<keyword id="KW-0325">Glycoprotein</keyword>
<keyword id="KW-0378">Hydrolase</keyword>
<keyword id="KW-0443">Lipid metabolism</keyword>
<keyword id="KW-0472">Membrane</keyword>
<keyword id="KW-0479">Metal-binding</keyword>
<keyword id="KW-1185">Reference proteome</keyword>
<keyword id="KW-0732">Signal</keyword>
<keyword id="KW-0812">Transmembrane</keyword>
<keyword id="KW-1133">Transmembrane helix</keyword>
<keyword id="KW-0862">Zinc</keyword>
<reference key="1">
    <citation type="journal article" date="2005" name="Biochim. Biophys. Acta">
        <title>Cloning of alkaline sphingomyelinase from rat intestinal mucosa and adjusting of the hypothetical protein XP_221184 in GenBank.</title>
        <authorList>
            <person name="Wu J."/>
            <person name="Cheng Y."/>
            <person name="Palmberg C."/>
            <person name="Bergman T."/>
            <person name="Nilsson A."/>
            <person name="Duan R.-D."/>
        </authorList>
    </citation>
    <scope>NUCLEOTIDE SEQUENCE [MRNA]</scope>
    <scope>PROTEIN SEQUENCE OF 32-40; 106-116; 204-211; 221-226; 255-263 AND 317-342</scope>
    <scope>IDENTIFICATION BY MASS SPECTROMETRY</scope>
    <scope>CATALYTIC ACTIVITY</scope>
    <scope>FUNCTION</scope>
    <scope>BIOPHYSICOCHEMICAL PROPERTIES</scope>
    <scope>TISSUE SPECIFICITY</scope>
    <source>
        <strain>Sprague-Dawley</strain>
        <tissue>Intestinal mucosa</tissue>
    </source>
</reference>
<reference key="2">
    <citation type="journal article" date="2004" name="Am. J. Physiol.">
        <title>Pancreatic trypsin cleaves intestinal alkaline sphingomyelinase from mucosa and enhances the sphingomyelinase activity.</title>
        <authorList>
            <person name="Wu J."/>
            <person name="Liu F."/>
            <person name="Nilsson A."/>
            <person name="Duan R.D."/>
        </authorList>
    </citation>
    <scope>SUBCELLULAR LOCATION</scope>
    <scope>TOPOLOGY</scope>
    <scope>TISSUE SPECIFICITY</scope>
</reference>
<reference key="3">
    <citation type="journal article" date="2006" name="Biochem. J.">
        <title>Intestinal alkaline sphingomyelinase hydrolyses and inactivates platelet-activating factor by a phospholipase C activity.</title>
        <authorList>
            <person name="Wu J."/>
            <person name="Nilsson A."/>
            <person name="Joensson B.A."/>
            <person name="Stenstad H."/>
            <person name="Agace W."/>
            <person name="Cheng Y."/>
            <person name="Duan R.D."/>
        </authorList>
    </citation>
    <scope>CATALYTIC ACTIVITY</scope>
    <scope>FUNCTION</scope>
    <scope>ACTIVITY REGULATION</scope>
    <scope>BIOPHYSICOCHEMICAL PROPERTIES</scope>
    <scope>MUTAGENESIS OF ASP-198 AND ASP-245</scope>
</reference>
<dbReference type="EC" id="3.1.4.12" evidence="5 6"/>
<dbReference type="EMBL" id="AY568760">
    <property type="protein sequence ID" value="AAU03450.1"/>
    <property type="molecule type" value="mRNA"/>
</dbReference>
<dbReference type="RefSeq" id="NP_001012484.1">
    <property type="nucleotide sequence ID" value="NM_001012466.1"/>
</dbReference>
<dbReference type="SMR" id="Q5EZ72"/>
<dbReference type="FunCoup" id="Q5EZ72">
    <property type="interactions" value="9"/>
</dbReference>
<dbReference type="STRING" id="10116.ENSRNOP00000064040"/>
<dbReference type="GlyCosmos" id="Q5EZ72">
    <property type="glycosylation" value="5 sites, No reported glycans"/>
</dbReference>
<dbReference type="GlyGen" id="Q5EZ72">
    <property type="glycosylation" value="6 sites"/>
</dbReference>
<dbReference type="PhosphoSitePlus" id="Q5EZ72"/>
<dbReference type="PaxDb" id="10116-ENSRNOP00000064040"/>
<dbReference type="GeneID" id="303729"/>
<dbReference type="KEGG" id="rno:303729"/>
<dbReference type="AGR" id="RGD:1359324"/>
<dbReference type="CTD" id="339221"/>
<dbReference type="RGD" id="1359324">
    <property type="gene designation" value="Enpp7"/>
</dbReference>
<dbReference type="eggNOG" id="KOG2645">
    <property type="taxonomic scope" value="Eukaryota"/>
</dbReference>
<dbReference type="InParanoid" id="Q5EZ72"/>
<dbReference type="PhylomeDB" id="Q5EZ72"/>
<dbReference type="Reactome" id="R-RNO-9840310">
    <property type="pathway name" value="Glycosphingolipid catabolism"/>
</dbReference>
<dbReference type="PRO" id="PR:Q5EZ72"/>
<dbReference type="Proteomes" id="UP000002494">
    <property type="component" value="Unplaced"/>
</dbReference>
<dbReference type="GO" id="GO:0005794">
    <property type="term" value="C:Golgi apparatus"/>
    <property type="evidence" value="ECO:0000266"/>
    <property type="project" value="RGD"/>
</dbReference>
<dbReference type="GO" id="GO:0005902">
    <property type="term" value="C:microvillus"/>
    <property type="evidence" value="ECO:0000266"/>
    <property type="project" value="RGD"/>
</dbReference>
<dbReference type="GO" id="GO:0005886">
    <property type="term" value="C:plasma membrane"/>
    <property type="evidence" value="ECO:0000250"/>
    <property type="project" value="UniProtKB"/>
</dbReference>
<dbReference type="GO" id="GO:0008081">
    <property type="term" value="F:phosphoric diester hydrolase activity"/>
    <property type="evidence" value="ECO:0000314"/>
    <property type="project" value="UniProtKB"/>
</dbReference>
<dbReference type="GO" id="GO:0004767">
    <property type="term" value="F:sphingomyelin phosphodiesterase activity"/>
    <property type="evidence" value="ECO:0000314"/>
    <property type="project" value="UniProtKB"/>
</dbReference>
<dbReference type="GO" id="GO:0008270">
    <property type="term" value="F:zinc ion binding"/>
    <property type="evidence" value="ECO:0000250"/>
    <property type="project" value="UniProtKB"/>
</dbReference>
<dbReference type="GO" id="GO:0055089">
    <property type="term" value="P:fatty acid homeostasis"/>
    <property type="evidence" value="ECO:0000250"/>
    <property type="project" value="UniProtKB"/>
</dbReference>
<dbReference type="GO" id="GO:0044241">
    <property type="term" value="P:lipid digestion"/>
    <property type="evidence" value="ECO:0000250"/>
    <property type="project" value="UniProtKB"/>
</dbReference>
<dbReference type="GO" id="GO:0008285">
    <property type="term" value="P:negative regulation of cell population proliferation"/>
    <property type="evidence" value="ECO:0000266"/>
    <property type="project" value="RGD"/>
</dbReference>
<dbReference type="GO" id="GO:0008156">
    <property type="term" value="P:negative regulation of DNA replication"/>
    <property type="evidence" value="ECO:0000266"/>
    <property type="project" value="RGD"/>
</dbReference>
<dbReference type="GO" id="GO:2000304">
    <property type="term" value="P:positive regulation of ceramide biosynthetic process"/>
    <property type="evidence" value="ECO:0000250"/>
    <property type="project" value="UniProtKB"/>
</dbReference>
<dbReference type="GO" id="GO:0045797">
    <property type="term" value="P:positive regulation of intestinal cholesterol absorption"/>
    <property type="evidence" value="ECO:0000250"/>
    <property type="project" value="UniProtKB"/>
</dbReference>
<dbReference type="GO" id="GO:2000755">
    <property type="term" value="P:positive regulation of sphingomyelin catabolic process"/>
    <property type="evidence" value="ECO:0000250"/>
    <property type="project" value="UniProtKB"/>
</dbReference>
<dbReference type="GO" id="GO:1904729">
    <property type="term" value="P:regulation of intestinal lipid absorption"/>
    <property type="evidence" value="ECO:0000250"/>
    <property type="project" value="UniProtKB"/>
</dbReference>
<dbReference type="GO" id="GO:0006684">
    <property type="term" value="P:sphingomyelin metabolic process"/>
    <property type="evidence" value="ECO:0000250"/>
    <property type="project" value="UniProtKB"/>
</dbReference>
<dbReference type="CDD" id="cd16018">
    <property type="entry name" value="Enpp"/>
    <property type="match status" value="1"/>
</dbReference>
<dbReference type="FunFam" id="3.40.720.10:FF:000048">
    <property type="entry name" value="ectonucleotide pyrophosphatase/phosphodiesterase family member 7"/>
    <property type="match status" value="1"/>
</dbReference>
<dbReference type="Gene3D" id="3.30.1360.180">
    <property type="match status" value="1"/>
</dbReference>
<dbReference type="Gene3D" id="3.40.720.10">
    <property type="entry name" value="Alkaline Phosphatase, subunit A"/>
    <property type="match status" value="1"/>
</dbReference>
<dbReference type="InterPro" id="IPR017850">
    <property type="entry name" value="Alkaline_phosphatase_core_sf"/>
</dbReference>
<dbReference type="InterPro" id="IPR002591">
    <property type="entry name" value="Phosphodiest/P_Trfase"/>
</dbReference>
<dbReference type="PANTHER" id="PTHR10151">
    <property type="entry name" value="ECTONUCLEOTIDE PYROPHOSPHATASE/PHOSPHODIESTERASE"/>
    <property type="match status" value="1"/>
</dbReference>
<dbReference type="PANTHER" id="PTHR10151:SF63">
    <property type="entry name" value="ECTONUCLEOTIDE PYROPHOSPHATASE_PHOSPHODIESTERASE FAMILY MEMBER 7"/>
    <property type="match status" value="1"/>
</dbReference>
<dbReference type="Pfam" id="PF01663">
    <property type="entry name" value="Phosphodiest"/>
    <property type="match status" value="1"/>
</dbReference>
<dbReference type="SUPFAM" id="SSF53649">
    <property type="entry name" value="Alkaline phosphatase-like"/>
    <property type="match status" value="1"/>
</dbReference>
<sequence length="439" mass="49837">MGHSAVLLSVALVILPACVTGGPVQRQQQHKLLLVSFDGFRWNYDQDVETPNLDSMAQEGVKARYMTPAFVTMTSPCHFTLVTGKYIENHGVVHNMFYNTTNKVRLPYHATLGIQRWWDNGSIPIWITAQRQGLKTGSFFYPGGNVTYQGEAVTMSRKEGVLHNYKNETEWRANVDTVMKWFTEEDVSLVTLYFGEPDSTGHKYGPESQERKDMVKQVDRTVGYLRDSIKRHHLTDSLNLIITSDHGMTTVNKKASDLVEFHKFPNFTFRDIEFELLDYGPNGMLIPKEGMLEKVYSVLKDAHPRLHVYKKEDFPKTFHYANNPRITSLLMYSDLGYVIHGRVNVQFNSGEHGFDNQDMDMKTIFRAVGPSFKAGLEVEPFESVHVYELMCQLLGIVPEPNDGHPGVLQPMLRSGSPLSRQHHLVVVLMGILTGLAKVV</sequence>
<comment type="function">
    <text evidence="1 5 6">Choline-specific phosphodiesterase that hydrolyzes sphingomyelin (SM) releasing the ceramide and phosphocholine and therefore is involved in sphingomyelin digestion, ceramide formation, and fatty acid (FA) absorption in the gastrointestinal tract (PubMed:15708357, PubMed:16255717). Also has phospholipase C activity and can also cleave phosphocholine from palmitoyl lyso-phosphatidylcholine and platelet-activating factor (PAF) leading to its inactivation. Does not have nucleotide pyrophosphatase activity (PubMed:16255717). May promote cholesterol absorption by affecting the levels of sphingomyelin derived from either diet or endogenous sources, in the intestinal lumen (By similarity).</text>
</comment>
<comment type="catalytic activity">
    <reaction evidence="5 6">
        <text>a sphingomyelin + H2O = phosphocholine + an N-acylsphing-4-enine + H(+)</text>
        <dbReference type="Rhea" id="RHEA:19253"/>
        <dbReference type="ChEBI" id="CHEBI:15377"/>
        <dbReference type="ChEBI" id="CHEBI:15378"/>
        <dbReference type="ChEBI" id="CHEBI:17636"/>
        <dbReference type="ChEBI" id="CHEBI:52639"/>
        <dbReference type="ChEBI" id="CHEBI:295975"/>
        <dbReference type="EC" id="3.1.4.12"/>
    </reaction>
    <physiologicalReaction direction="left-to-right" evidence="11">
        <dbReference type="Rhea" id="RHEA:19254"/>
    </physiologicalReaction>
</comment>
<comment type="catalytic activity">
    <reaction evidence="6">
        <text>a 1-O-alkyl-2-acetyl-sn-glycero-3-phosphocholine + H2O = a 1-O-alkyl-2-acetyl-sn-glycerol + phosphocholine + H(+)</text>
        <dbReference type="Rhea" id="RHEA:63380"/>
        <dbReference type="ChEBI" id="CHEBI:15377"/>
        <dbReference type="ChEBI" id="CHEBI:15378"/>
        <dbReference type="ChEBI" id="CHEBI:16291"/>
        <dbReference type="ChEBI" id="CHEBI:36707"/>
        <dbReference type="ChEBI" id="CHEBI:295975"/>
    </reaction>
    <physiologicalReaction direction="left-to-right" evidence="12">
        <dbReference type="Rhea" id="RHEA:63381"/>
    </physiologicalReaction>
</comment>
<comment type="catalytic activity">
    <reaction evidence="6">
        <text>1-O-octadecyl-2-acetyl-sn-glycero-3-phosphocholine + H2O = 1-O-octadecyl-2-acetyl-sn-glycerol + phosphocholine + H(+)</text>
        <dbReference type="Rhea" id="RHEA:63384"/>
        <dbReference type="ChEBI" id="CHEBI:15377"/>
        <dbReference type="ChEBI" id="CHEBI:15378"/>
        <dbReference type="ChEBI" id="CHEBI:52450"/>
        <dbReference type="ChEBI" id="CHEBI:147296"/>
        <dbReference type="ChEBI" id="CHEBI:295975"/>
    </reaction>
    <physiologicalReaction direction="left-to-right" evidence="12">
        <dbReference type="Rhea" id="RHEA:63385"/>
    </physiologicalReaction>
</comment>
<comment type="catalytic activity">
    <reaction evidence="2">
        <text>1-hexadecanoyl-sn-glycero-3-phosphocholine + H2O = 1-hexadecanoyl-sn-glycerol + phosphocholine + H(+)</text>
        <dbReference type="Rhea" id="RHEA:41119"/>
        <dbReference type="ChEBI" id="CHEBI:15377"/>
        <dbReference type="ChEBI" id="CHEBI:15378"/>
        <dbReference type="ChEBI" id="CHEBI:72998"/>
        <dbReference type="ChEBI" id="CHEBI:75542"/>
        <dbReference type="ChEBI" id="CHEBI:295975"/>
    </reaction>
    <physiologicalReaction direction="left-to-right" evidence="2">
        <dbReference type="Rhea" id="RHEA:41120"/>
    </physiologicalReaction>
</comment>
<comment type="cofactor">
    <cofactor evidence="2">
        <name>Zn(2+)</name>
        <dbReference type="ChEBI" id="CHEBI:29105"/>
    </cofactor>
</comment>
<comment type="activity regulation">
    <text evidence="6">platelet-activating factor hydrolysis is inhibited by higher amount of sphingomyelin (PubMed:16255717). The hydrolysis of platelet-activating factor and sphingomyelin can be inhibited by the presence of sphingomyelin and platelet-activating factor respectively, the inhibition of platelet-activating factor hydrolysis by sphingomyelin being stronger (PubMed:16255717). PAF hydrolysis is dose-dependently increased by both taurocholate (TC) and taurodeoxycholate (TDC) (PubMed:16255717). Hydrolase activity against PAF is inhibited by EDTA and stimulated by 0.1-0.25 mM Zn2+ (PubMed:16255717).</text>
</comment>
<comment type="biophysicochemical properties">
    <kinetics>
        <KM evidence="6">13.6 uM for 2-acetyl-1-alkyl-sn-glycero-3-phosphocholine</KM>
        <Vmax evidence="6">374.0 umol/h/mg enzyme</Vmax>
    </kinetics>
    <phDependence>
        <text evidence="5 6">Optimum pH is 7.5 (PubMed:16255717). Optimum pH is 9 (PubMed:15708357).</text>
    </phDependence>
</comment>
<comment type="subcellular location">
    <subcellularLocation>
        <location evidence="4">Cell membrane</location>
        <topology evidence="4">Single-pass type I membrane protein</topology>
    </subcellularLocation>
    <text evidence="2 4">The catalytic domain is released into the extracellular medium when cells are treated with trypsin (PubMed:15205117). Localized at the surface of the microvillar membrane in small intestine enterocytes, and in endosome-like structures situated beneath the microvillar membrane, and in Golgi complex (By similarity).</text>
</comment>
<comment type="tissue specificity">
    <text evidence="4 5">Detected in small intestine (at protein level) (PubMed:15205117). Highly expressed in the jejunum (PubMed:15708357).</text>
</comment>
<comment type="PTM">
    <text evidence="2">N-glycosylated; required for activity and transport to the plasma membrane.</text>
</comment>
<comment type="similarity">
    <text evidence="9">Belongs to the nucleotide pyrophosphatase/phosphodiesterase family.</text>
</comment>
<evidence type="ECO:0000250" key="1">
    <source>
        <dbReference type="UniProtKB" id="Q3TIW9"/>
    </source>
</evidence>
<evidence type="ECO:0000250" key="2">
    <source>
        <dbReference type="UniProtKB" id="Q6UWV6"/>
    </source>
</evidence>
<evidence type="ECO:0000255" key="3"/>
<evidence type="ECO:0000269" key="4">
    <source>
    </source>
</evidence>
<evidence type="ECO:0000269" key="5">
    <source>
    </source>
</evidence>
<evidence type="ECO:0000269" key="6">
    <source>
    </source>
</evidence>
<evidence type="ECO:0000303" key="7">
    <source>
    </source>
</evidence>
<evidence type="ECO:0000303" key="8">
    <source>
    </source>
</evidence>
<evidence type="ECO:0000305" key="9"/>
<evidence type="ECO:0000305" key="10">
    <source>
    </source>
</evidence>
<evidence type="ECO:0000305" key="11">
    <source>
    </source>
</evidence>
<evidence type="ECO:0000305" key="12">
    <source>
    </source>
</evidence>
<evidence type="ECO:0000312" key="13">
    <source>
        <dbReference type="RGD" id="1359324"/>
    </source>
</evidence>
<organism>
    <name type="scientific">Rattus norvegicus</name>
    <name type="common">Rat</name>
    <dbReference type="NCBI Taxonomy" id="10116"/>
    <lineage>
        <taxon>Eukaryota</taxon>
        <taxon>Metazoa</taxon>
        <taxon>Chordata</taxon>
        <taxon>Craniata</taxon>
        <taxon>Vertebrata</taxon>
        <taxon>Euteleostomi</taxon>
        <taxon>Mammalia</taxon>
        <taxon>Eutheria</taxon>
        <taxon>Euarchontoglires</taxon>
        <taxon>Glires</taxon>
        <taxon>Rodentia</taxon>
        <taxon>Myomorpha</taxon>
        <taxon>Muroidea</taxon>
        <taxon>Muridae</taxon>
        <taxon>Murinae</taxon>
        <taxon>Rattus</taxon>
    </lineage>
</organism>